<protein>
    <recommendedName>
        <fullName evidence="2">CDP-diacylglycerol--glycerol-3-phosphate 3-phosphatidyltransferase</fullName>
        <ecNumber evidence="2">2.7.8.5</ecNumber>
    </recommendedName>
    <alternativeName>
        <fullName evidence="2">Phosphatidylglycerophosphate synthase</fullName>
        <shortName evidence="2">PGP synthase</shortName>
    </alternativeName>
</protein>
<comment type="function">
    <text evidence="2">Catalyzes the conversion of cytidine diphosphate diacylglycerol (CDP-DG) and glycerol 3-phosphate into phosphatidylglycerol. Essential for the synthesis of anionic phospholipids, thereby playing a role in balancing the ratio of zwitterionic and anionic phospholipids, which is thought to be important for normal membrane function.</text>
</comment>
<comment type="catalytic activity">
    <reaction evidence="2">
        <text>a CDP-1,2-diacyl-sn-glycerol + sn-glycerol 3-phosphate = a 1,2-diacyl-sn-glycero-3-phospho-(1'-sn-glycero-3'-phosphate) + CMP + H(+)</text>
        <dbReference type="Rhea" id="RHEA:12593"/>
        <dbReference type="ChEBI" id="CHEBI:15378"/>
        <dbReference type="ChEBI" id="CHEBI:57597"/>
        <dbReference type="ChEBI" id="CHEBI:58332"/>
        <dbReference type="ChEBI" id="CHEBI:60110"/>
        <dbReference type="ChEBI" id="CHEBI:60377"/>
        <dbReference type="EC" id="2.7.8.5"/>
    </reaction>
</comment>
<comment type="pathway">
    <text evidence="2">Phospholipid metabolism; phosphatidylglycerol biosynthesis; phosphatidylglycerol from CDP-diacylglycerol: step 1/2.</text>
</comment>
<comment type="subcellular location">
    <subcellularLocation>
        <location evidence="2">Cell inner membrane</location>
        <topology evidence="2">Multi-pass membrane protein</topology>
    </subcellularLocation>
</comment>
<comment type="similarity">
    <text evidence="2">Belongs to the CDP-alcohol phosphatidyltransferase class-I family.</text>
</comment>
<evidence type="ECO:0000250" key="1"/>
<evidence type="ECO:0000255" key="2">
    <source>
        <dbReference type="HAMAP-Rule" id="MF_01437"/>
    </source>
</evidence>
<proteinExistence type="inferred from homology"/>
<dbReference type="EC" id="2.7.8.5" evidence="2"/>
<dbReference type="EMBL" id="AE006468">
    <property type="protein sequence ID" value="AAL20857.1"/>
    <property type="molecule type" value="Genomic_DNA"/>
</dbReference>
<dbReference type="RefSeq" id="NP_460898.1">
    <property type="nucleotide sequence ID" value="NC_003197.2"/>
</dbReference>
<dbReference type="RefSeq" id="WP_001160192.1">
    <property type="nucleotide sequence ID" value="NC_003197.2"/>
</dbReference>
<dbReference type="SMR" id="Q7CQB9"/>
<dbReference type="STRING" id="99287.STM1945"/>
<dbReference type="PaxDb" id="99287-STM1945"/>
<dbReference type="GeneID" id="1253466"/>
<dbReference type="KEGG" id="stm:STM1945"/>
<dbReference type="PATRIC" id="fig|99287.12.peg.2059"/>
<dbReference type="HOGENOM" id="CLU_051314_2_1_6"/>
<dbReference type="OMA" id="WSMVYYL"/>
<dbReference type="PhylomeDB" id="Q7CQB9"/>
<dbReference type="BioCyc" id="SENT99287:STM1945-MONOMER"/>
<dbReference type="UniPathway" id="UPA00084">
    <property type="reaction ID" value="UER00503"/>
</dbReference>
<dbReference type="Proteomes" id="UP000001014">
    <property type="component" value="Chromosome"/>
</dbReference>
<dbReference type="GO" id="GO:0005886">
    <property type="term" value="C:plasma membrane"/>
    <property type="evidence" value="ECO:0000318"/>
    <property type="project" value="GO_Central"/>
</dbReference>
<dbReference type="GO" id="GO:0008444">
    <property type="term" value="F:CDP-diacylglycerol-glycerol-3-phosphate 3-phosphatidyltransferase activity"/>
    <property type="evidence" value="ECO:0007669"/>
    <property type="project" value="UniProtKB-UniRule"/>
</dbReference>
<dbReference type="GO" id="GO:0046474">
    <property type="term" value="P:glycerophospholipid biosynthetic process"/>
    <property type="evidence" value="ECO:0000318"/>
    <property type="project" value="GO_Central"/>
</dbReference>
<dbReference type="GO" id="GO:0006655">
    <property type="term" value="P:phosphatidylglycerol biosynthetic process"/>
    <property type="evidence" value="ECO:0007669"/>
    <property type="project" value="UniProtKB-UniRule"/>
</dbReference>
<dbReference type="FunFam" id="1.20.120.1760:FF:000001">
    <property type="entry name" value="CDP-diacylglycerol--glycerol-3-phosphate 3-phosphatidyltransferase"/>
    <property type="match status" value="1"/>
</dbReference>
<dbReference type="Gene3D" id="1.20.120.1760">
    <property type="match status" value="1"/>
</dbReference>
<dbReference type="HAMAP" id="MF_01437">
    <property type="entry name" value="PgsA"/>
    <property type="match status" value="1"/>
</dbReference>
<dbReference type="InterPro" id="IPR050324">
    <property type="entry name" value="CDP-alcohol_PTase-I"/>
</dbReference>
<dbReference type="InterPro" id="IPR000462">
    <property type="entry name" value="CDP-OH_P_trans"/>
</dbReference>
<dbReference type="InterPro" id="IPR043130">
    <property type="entry name" value="CDP-OH_PTrfase_TM_dom"/>
</dbReference>
<dbReference type="InterPro" id="IPR048254">
    <property type="entry name" value="CDP_ALCOHOL_P_TRANSF_CS"/>
</dbReference>
<dbReference type="InterPro" id="IPR023762">
    <property type="entry name" value="PGP_synthase_bac"/>
</dbReference>
<dbReference type="InterPro" id="IPR004570">
    <property type="entry name" value="Phosphatidylglycerol_P_synth"/>
</dbReference>
<dbReference type="NCBIfam" id="TIGR00560">
    <property type="entry name" value="pgsA"/>
    <property type="match status" value="1"/>
</dbReference>
<dbReference type="NCBIfam" id="NF008090">
    <property type="entry name" value="PRK10832.1"/>
    <property type="match status" value="1"/>
</dbReference>
<dbReference type="PANTHER" id="PTHR14269:SF62">
    <property type="entry name" value="CDP-DIACYLGLYCEROL--GLYCEROL-3-PHOSPHATE 3-PHOSPHATIDYLTRANSFERASE 1, CHLOROPLASTIC"/>
    <property type="match status" value="1"/>
</dbReference>
<dbReference type="PANTHER" id="PTHR14269">
    <property type="entry name" value="CDP-DIACYLGLYCEROL--GLYCEROL-3-PHOSPHATE 3-PHOSPHATIDYLTRANSFERASE-RELATED"/>
    <property type="match status" value="1"/>
</dbReference>
<dbReference type="Pfam" id="PF01066">
    <property type="entry name" value="CDP-OH_P_transf"/>
    <property type="match status" value="1"/>
</dbReference>
<dbReference type="PIRSF" id="PIRSF000847">
    <property type="entry name" value="Phos_ph_gly_syn"/>
    <property type="match status" value="1"/>
</dbReference>
<dbReference type="PROSITE" id="PS00379">
    <property type="entry name" value="CDP_ALCOHOL_P_TRANSF"/>
    <property type="match status" value="1"/>
</dbReference>
<organism>
    <name type="scientific">Salmonella typhimurium (strain LT2 / SGSC1412 / ATCC 700720)</name>
    <dbReference type="NCBI Taxonomy" id="99287"/>
    <lineage>
        <taxon>Bacteria</taxon>
        <taxon>Pseudomonadati</taxon>
        <taxon>Pseudomonadota</taxon>
        <taxon>Gammaproteobacteria</taxon>
        <taxon>Enterobacterales</taxon>
        <taxon>Enterobacteriaceae</taxon>
        <taxon>Salmonella</taxon>
    </lineage>
</organism>
<feature type="initiator methionine" description="Removed" evidence="1">
    <location>
        <position position="1"/>
    </location>
</feature>
<feature type="chain" id="PRO_0000239128" description="CDP-diacylglycerol--glycerol-3-phosphate 3-phosphatidyltransferase">
    <location>
        <begin position="2"/>
        <end position="182"/>
    </location>
</feature>
<feature type="topological domain" description="Cytoplasmic" evidence="2">
    <location>
        <begin position="2"/>
        <end position="12"/>
    </location>
</feature>
<feature type="transmembrane region" description="Helical" evidence="2">
    <location>
        <begin position="13"/>
        <end position="37"/>
    </location>
</feature>
<feature type="topological domain" description="Periplasmic" evidence="2">
    <location>
        <begin position="38"/>
        <end position="60"/>
    </location>
</feature>
<feature type="transmembrane region" description="Helical" evidence="2">
    <location>
        <begin position="61"/>
        <end position="81"/>
    </location>
</feature>
<feature type="topological domain" description="Cytoplasmic" evidence="2">
    <location>
        <begin position="82"/>
        <end position="86"/>
    </location>
</feature>
<feature type="transmembrane region" description="Helical" evidence="2">
    <location>
        <begin position="87"/>
        <end position="107"/>
    </location>
</feature>
<feature type="topological domain" description="Periplasmic" evidence="2">
    <location>
        <begin position="108"/>
        <end position="145"/>
    </location>
</feature>
<feature type="transmembrane region" description="Helical" evidence="2">
    <location>
        <begin position="146"/>
        <end position="168"/>
    </location>
</feature>
<feature type="topological domain" description="Cytoplasmic" evidence="2">
    <location>
        <begin position="169"/>
        <end position="181"/>
    </location>
</feature>
<sequence>MQFNIPTLLTLFRVILIPFFVVVFYLPFAWAPMVSALIFCIAAITDWFDGFLARRWNQSTRFGAFLDPVADKVLVAIAMVLVTEHYHSWWVTLPAATMIAREIIISALREWMAELGKRSSVAVSWIGKVKTTAQMVALAWLLWRPNIWVEYAGIALFFVAAVLTLWSMLQYLSAARGDLLDQ</sequence>
<name>PGSA_SALTY</name>
<gene>
    <name evidence="2" type="primary">pgsA</name>
    <name type="ordered locus">STM1945</name>
</gene>
<accession>Q7CQB9</accession>
<reference key="1">
    <citation type="journal article" date="2001" name="Nature">
        <title>Complete genome sequence of Salmonella enterica serovar Typhimurium LT2.</title>
        <authorList>
            <person name="McClelland M."/>
            <person name="Sanderson K.E."/>
            <person name="Spieth J."/>
            <person name="Clifton S.W."/>
            <person name="Latreille P."/>
            <person name="Courtney L."/>
            <person name="Porwollik S."/>
            <person name="Ali J."/>
            <person name="Dante M."/>
            <person name="Du F."/>
            <person name="Hou S."/>
            <person name="Layman D."/>
            <person name="Leonard S."/>
            <person name="Nguyen C."/>
            <person name="Scott K."/>
            <person name="Holmes A."/>
            <person name="Grewal N."/>
            <person name="Mulvaney E."/>
            <person name="Ryan E."/>
            <person name="Sun H."/>
            <person name="Florea L."/>
            <person name="Miller W."/>
            <person name="Stoneking T."/>
            <person name="Nhan M."/>
            <person name="Waterston R."/>
            <person name="Wilson R.K."/>
        </authorList>
    </citation>
    <scope>NUCLEOTIDE SEQUENCE [LARGE SCALE GENOMIC DNA]</scope>
    <source>
        <strain>LT2 / SGSC1412 / ATCC 700720</strain>
    </source>
</reference>
<keyword id="KW-0997">Cell inner membrane</keyword>
<keyword id="KW-1003">Cell membrane</keyword>
<keyword id="KW-0444">Lipid biosynthesis</keyword>
<keyword id="KW-0443">Lipid metabolism</keyword>
<keyword id="KW-0472">Membrane</keyword>
<keyword id="KW-0594">Phospholipid biosynthesis</keyword>
<keyword id="KW-1208">Phospholipid metabolism</keyword>
<keyword id="KW-1185">Reference proteome</keyword>
<keyword id="KW-0808">Transferase</keyword>
<keyword id="KW-0812">Transmembrane</keyword>
<keyword id="KW-1133">Transmembrane helix</keyword>